<keyword id="KW-1185">Reference proteome</keyword>
<organism>
    <name type="scientific">Rickettsia prowazekii (strain Madrid E)</name>
    <dbReference type="NCBI Taxonomy" id="272947"/>
    <lineage>
        <taxon>Bacteria</taxon>
        <taxon>Pseudomonadati</taxon>
        <taxon>Pseudomonadota</taxon>
        <taxon>Alphaproteobacteria</taxon>
        <taxon>Rickettsiales</taxon>
        <taxon>Rickettsiaceae</taxon>
        <taxon>Rickettsieae</taxon>
        <taxon>Rickettsia</taxon>
        <taxon>typhus group</taxon>
    </lineage>
</organism>
<proteinExistence type="predicted"/>
<gene>
    <name type="ordered locus">RP164</name>
</gene>
<reference key="1">
    <citation type="journal article" date="1998" name="Nature">
        <title>The genome sequence of Rickettsia prowazekii and the origin of mitochondria.</title>
        <authorList>
            <person name="Andersson S.G.E."/>
            <person name="Zomorodipour A."/>
            <person name="Andersson J.O."/>
            <person name="Sicheritz-Ponten T."/>
            <person name="Alsmark U.C.M."/>
            <person name="Podowski R.M."/>
            <person name="Naeslund A.K."/>
            <person name="Eriksson A.-S."/>
            <person name="Winkler H.H."/>
            <person name="Kurland C.G."/>
        </authorList>
    </citation>
    <scope>NUCLEOTIDE SEQUENCE [LARGE SCALE GENOMIC DNA]</scope>
    <source>
        <strain>Madrid E</strain>
    </source>
</reference>
<dbReference type="EMBL" id="AJ235270">
    <property type="protein sequence ID" value="CAA14631.1"/>
    <property type="molecule type" value="Genomic_DNA"/>
</dbReference>
<dbReference type="PIR" id="H71726">
    <property type="entry name" value="H71726"/>
</dbReference>
<dbReference type="RefSeq" id="NP_220554.1">
    <property type="nucleotide sequence ID" value="NC_000963.1"/>
</dbReference>
<dbReference type="SMR" id="Q9ZDZ9"/>
<dbReference type="STRING" id="272947.gene:17555247"/>
<dbReference type="EnsemblBacteria" id="CAA14631">
    <property type="protein sequence ID" value="CAA14631"/>
    <property type="gene ID" value="CAA14631"/>
</dbReference>
<dbReference type="KEGG" id="rpr:RP164"/>
<dbReference type="PATRIC" id="fig|272947.5.peg.169"/>
<dbReference type="HOGENOM" id="CLU_3275931_0_0_5"/>
<dbReference type="OrthoDB" id="9915149at2"/>
<dbReference type="Proteomes" id="UP000002480">
    <property type="component" value="Chromosome"/>
</dbReference>
<feature type="chain" id="PRO_0000101323" description="Uncharacterized protein RP164">
    <location>
        <begin position="1"/>
        <end position="41"/>
    </location>
</feature>
<accession>Q9ZDZ9</accession>
<protein>
    <recommendedName>
        <fullName>Uncharacterized protein RP164</fullName>
    </recommendedName>
</protein>
<name>Y164_RICPR</name>
<sequence>MEFCTNTIDTISYTTHESIEEPNLKEKDIEDDLVVVSLIGN</sequence>